<name>SSRP_KLEP3</name>
<dbReference type="EMBL" id="CP000964">
    <property type="protein sequence ID" value="ACI06601.1"/>
    <property type="molecule type" value="Genomic_DNA"/>
</dbReference>
<dbReference type="SMR" id="B5XVJ3"/>
<dbReference type="KEGG" id="kpe:KPK_1178"/>
<dbReference type="HOGENOM" id="CLU_108953_3_0_6"/>
<dbReference type="Proteomes" id="UP000001734">
    <property type="component" value="Chromosome"/>
</dbReference>
<dbReference type="GO" id="GO:0005829">
    <property type="term" value="C:cytosol"/>
    <property type="evidence" value="ECO:0007669"/>
    <property type="project" value="TreeGrafter"/>
</dbReference>
<dbReference type="GO" id="GO:0003723">
    <property type="term" value="F:RNA binding"/>
    <property type="evidence" value="ECO:0007669"/>
    <property type="project" value="UniProtKB-UniRule"/>
</dbReference>
<dbReference type="GO" id="GO:0070929">
    <property type="term" value="P:trans-translation"/>
    <property type="evidence" value="ECO:0007669"/>
    <property type="project" value="UniProtKB-UniRule"/>
</dbReference>
<dbReference type="CDD" id="cd09294">
    <property type="entry name" value="SmpB"/>
    <property type="match status" value="1"/>
</dbReference>
<dbReference type="FunFam" id="2.40.280.10:FF:000001">
    <property type="entry name" value="SsrA-binding protein"/>
    <property type="match status" value="1"/>
</dbReference>
<dbReference type="Gene3D" id="2.40.280.10">
    <property type="match status" value="1"/>
</dbReference>
<dbReference type="HAMAP" id="MF_00023">
    <property type="entry name" value="SmpB"/>
    <property type="match status" value="1"/>
</dbReference>
<dbReference type="InterPro" id="IPR023620">
    <property type="entry name" value="SmpB"/>
</dbReference>
<dbReference type="InterPro" id="IPR000037">
    <property type="entry name" value="SsrA-bd_prot"/>
</dbReference>
<dbReference type="InterPro" id="IPR020081">
    <property type="entry name" value="SsrA-bd_prot_CS"/>
</dbReference>
<dbReference type="NCBIfam" id="NF003843">
    <property type="entry name" value="PRK05422.1"/>
    <property type="match status" value="1"/>
</dbReference>
<dbReference type="NCBIfam" id="TIGR00086">
    <property type="entry name" value="smpB"/>
    <property type="match status" value="1"/>
</dbReference>
<dbReference type="PANTHER" id="PTHR30308:SF2">
    <property type="entry name" value="SSRA-BINDING PROTEIN"/>
    <property type="match status" value="1"/>
</dbReference>
<dbReference type="PANTHER" id="PTHR30308">
    <property type="entry name" value="TMRNA-BINDING COMPONENT OF TRANS-TRANSLATION TAGGING COMPLEX"/>
    <property type="match status" value="1"/>
</dbReference>
<dbReference type="Pfam" id="PF01668">
    <property type="entry name" value="SmpB"/>
    <property type="match status" value="1"/>
</dbReference>
<dbReference type="SUPFAM" id="SSF74982">
    <property type="entry name" value="Small protein B (SmpB)"/>
    <property type="match status" value="1"/>
</dbReference>
<dbReference type="PROSITE" id="PS01317">
    <property type="entry name" value="SSRP"/>
    <property type="match status" value="1"/>
</dbReference>
<organism>
    <name type="scientific">Klebsiella pneumoniae (strain 342)</name>
    <dbReference type="NCBI Taxonomy" id="507522"/>
    <lineage>
        <taxon>Bacteria</taxon>
        <taxon>Pseudomonadati</taxon>
        <taxon>Pseudomonadota</taxon>
        <taxon>Gammaproteobacteria</taxon>
        <taxon>Enterobacterales</taxon>
        <taxon>Enterobacteriaceae</taxon>
        <taxon>Klebsiella/Raoultella group</taxon>
        <taxon>Klebsiella</taxon>
        <taxon>Klebsiella pneumoniae complex</taxon>
    </lineage>
</organism>
<evidence type="ECO:0000255" key="1">
    <source>
        <dbReference type="HAMAP-Rule" id="MF_00023"/>
    </source>
</evidence>
<gene>
    <name evidence="1" type="primary">smpB</name>
    <name type="ordered locus">KPK_1178</name>
</gene>
<reference key="1">
    <citation type="journal article" date="2008" name="PLoS Genet.">
        <title>Complete genome sequence of the N2-fixing broad host range endophyte Klebsiella pneumoniae 342 and virulence predictions verified in mice.</title>
        <authorList>
            <person name="Fouts D.E."/>
            <person name="Tyler H.L."/>
            <person name="DeBoy R.T."/>
            <person name="Daugherty S."/>
            <person name="Ren Q."/>
            <person name="Badger J.H."/>
            <person name="Durkin A.S."/>
            <person name="Huot H."/>
            <person name="Shrivastava S."/>
            <person name="Kothari S."/>
            <person name="Dodson R.J."/>
            <person name="Mohamoud Y."/>
            <person name="Khouri H."/>
            <person name="Roesch L.F.W."/>
            <person name="Krogfelt K.A."/>
            <person name="Struve C."/>
            <person name="Triplett E.W."/>
            <person name="Methe B.A."/>
        </authorList>
    </citation>
    <scope>NUCLEOTIDE SEQUENCE [LARGE SCALE GENOMIC DNA]</scope>
    <source>
        <strain>342</strain>
    </source>
</reference>
<feature type="chain" id="PRO_1000090157" description="SsrA-binding protein">
    <location>
        <begin position="1"/>
        <end position="160"/>
    </location>
</feature>
<accession>B5XVJ3</accession>
<sequence>MTKKKAHKPGSATIALNKRARHEYFIEDEYEAGLALQGWEVKSLRAGKANIGDSYVILKDGEAFLFGANFTPMAVASTHYVCDPTRTRKLLLNQRELDTLYGRINREGYTVVALSLYWKNAWCKVKIGVAKGKKQHDKRTDLKDREWALDKARIMKHAGR</sequence>
<protein>
    <recommendedName>
        <fullName evidence="1">SsrA-binding protein</fullName>
    </recommendedName>
    <alternativeName>
        <fullName evidence="1">Small protein B</fullName>
    </alternativeName>
</protein>
<comment type="function">
    <text evidence="1">Required for rescue of stalled ribosomes mediated by trans-translation. Binds to transfer-messenger RNA (tmRNA), required for stable association of tmRNA with ribosomes. tmRNA and SmpB together mimic tRNA shape, replacing the anticodon stem-loop with SmpB. tmRNA is encoded by the ssrA gene; the 2 termini fold to resemble tRNA(Ala) and it encodes a 'tag peptide', a short internal open reading frame. During trans-translation Ala-aminoacylated tmRNA acts like a tRNA, entering the A-site of stalled ribosomes, displacing the stalled mRNA. The ribosome then switches to translate the ORF on the tmRNA; the nascent peptide is terminated with the 'tag peptide' encoded by the tmRNA and targeted for degradation. The ribosome is freed to recommence translation, which seems to be the essential function of trans-translation.</text>
</comment>
<comment type="subcellular location">
    <subcellularLocation>
        <location evidence="1">Cytoplasm</location>
    </subcellularLocation>
    <text evidence="1">The tmRNA-SmpB complex associates with stalled 70S ribosomes.</text>
</comment>
<comment type="similarity">
    <text evidence="1">Belongs to the SmpB family.</text>
</comment>
<keyword id="KW-0963">Cytoplasm</keyword>
<keyword id="KW-0694">RNA-binding</keyword>
<proteinExistence type="inferred from homology"/>